<protein>
    <recommendedName>
        <fullName>HTH-type transcriptional regulator PcaQ</fullName>
    </recommendedName>
    <alternativeName>
        <fullName>Pca operon transcriptional activator</fullName>
    </alternativeName>
</protein>
<organism>
    <name type="scientific">Rhizobium radiobacter</name>
    <name type="common">Agrobacterium tumefaciens</name>
    <name type="synonym">Agrobacterium radiobacter</name>
    <dbReference type="NCBI Taxonomy" id="358"/>
    <lineage>
        <taxon>Bacteria</taxon>
        <taxon>Pseudomonadati</taxon>
        <taxon>Pseudomonadota</taxon>
        <taxon>Alphaproteobacteria</taxon>
        <taxon>Hyphomicrobiales</taxon>
        <taxon>Rhizobiaceae</taxon>
        <taxon>Rhizobium/Agrobacterium group</taxon>
        <taxon>Agrobacterium</taxon>
        <taxon>Agrobacterium tumefaciens complex</taxon>
    </lineage>
</organism>
<feature type="chain" id="PRO_0000105740" description="HTH-type transcriptional regulator PcaQ">
    <location>
        <begin position="1"/>
        <end position="311"/>
    </location>
</feature>
<feature type="domain" description="HTH lysR-type" evidence="1">
    <location>
        <begin position="6"/>
        <end position="63"/>
    </location>
</feature>
<feature type="DNA-binding region" description="H-T-H motif" evidence="1">
    <location>
        <begin position="23"/>
        <end position="42"/>
    </location>
</feature>
<reference key="1">
    <citation type="journal article" date="1996" name="J. Bacteriol.">
        <title>Characterization of PcaQ, a LysR-type transcriptional activator required for catabolism of phenolic compounds, from Agrobacterium tumefaciens.</title>
        <authorList>
            <person name="Parke D."/>
        </authorList>
    </citation>
    <scope>NUCLEOTIDE SEQUENCE [GENOMIC DNA]</scope>
    <source>
        <strain>A348</strain>
    </source>
</reference>
<sequence>MVDQRIKFRHLQTFVEVARQKSVIRAAEILHVSQPAVTKTIRELEDVLGVSLLEREGRGIRISRYGEVFLRHAGATMTALRQAVDSVSQEAARAGPPVRVGALPTVSVRIMPKAMSGFLAEKTGSPVKIVTGENAVLLEQLRVGDLDLVVGRLAAPQKMAGFSFEHLYSEKVRFVVRAGHPLLSPGLSVFDHLHEYPVLMPTRQSVIGPVVEQFLIANGVPALPIRIETVSDAFGRAFLRTSDAIWIISEGVVAADVADGILAILPVETGDTSGPVGLTVRADTQPSLPLSLLMQAIREAAGELFDGRTEG</sequence>
<name>PCAQ_RHIRD</name>
<gene>
    <name type="primary">pcaQ</name>
</gene>
<dbReference type="EMBL" id="U32867">
    <property type="protein sequence ID" value="AAA91130.1"/>
    <property type="molecule type" value="Genomic_DNA"/>
</dbReference>
<dbReference type="SMR" id="P0A4T7"/>
<dbReference type="eggNOG" id="COG0583">
    <property type="taxonomic scope" value="Bacteria"/>
</dbReference>
<dbReference type="GO" id="GO:0005829">
    <property type="term" value="C:cytosol"/>
    <property type="evidence" value="ECO:0007669"/>
    <property type="project" value="TreeGrafter"/>
</dbReference>
<dbReference type="GO" id="GO:0003677">
    <property type="term" value="F:DNA binding"/>
    <property type="evidence" value="ECO:0007669"/>
    <property type="project" value="UniProtKB-KW"/>
</dbReference>
<dbReference type="GO" id="GO:0003700">
    <property type="term" value="F:DNA-binding transcription factor activity"/>
    <property type="evidence" value="ECO:0007669"/>
    <property type="project" value="InterPro"/>
</dbReference>
<dbReference type="GO" id="GO:0019619">
    <property type="term" value="P:3,4-dihydroxybenzoate catabolic process"/>
    <property type="evidence" value="ECO:0007669"/>
    <property type="project" value="InterPro"/>
</dbReference>
<dbReference type="GO" id="GO:0045893">
    <property type="term" value="P:positive regulation of DNA-templated transcription"/>
    <property type="evidence" value="ECO:0007669"/>
    <property type="project" value="InterPro"/>
</dbReference>
<dbReference type="FunFam" id="1.10.10.10:FF:000208">
    <property type="entry name" value="LysR family transcriptional regulator"/>
    <property type="match status" value="1"/>
</dbReference>
<dbReference type="Gene3D" id="3.40.190.10">
    <property type="entry name" value="Periplasmic binding protein-like II"/>
    <property type="match status" value="2"/>
</dbReference>
<dbReference type="Gene3D" id="1.10.10.10">
    <property type="entry name" value="Winged helix-like DNA-binding domain superfamily/Winged helix DNA-binding domain"/>
    <property type="match status" value="1"/>
</dbReference>
<dbReference type="InterPro" id="IPR050950">
    <property type="entry name" value="HTH-type_LysR_regulators"/>
</dbReference>
<dbReference type="InterPro" id="IPR005119">
    <property type="entry name" value="LysR_subst-bd"/>
</dbReference>
<dbReference type="InterPro" id="IPR012787">
    <property type="entry name" value="TF_PcaQ"/>
</dbReference>
<dbReference type="InterPro" id="IPR000847">
    <property type="entry name" value="Tscrpt_reg_HTH_LysR"/>
</dbReference>
<dbReference type="InterPro" id="IPR036388">
    <property type="entry name" value="WH-like_DNA-bd_sf"/>
</dbReference>
<dbReference type="InterPro" id="IPR036390">
    <property type="entry name" value="WH_DNA-bd_sf"/>
</dbReference>
<dbReference type="NCBIfam" id="TIGR02424">
    <property type="entry name" value="TF_pcaQ"/>
    <property type="match status" value="1"/>
</dbReference>
<dbReference type="PANTHER" id="PTHR30419">
    <property type="entry name" value="HTH-TYPE TRANSCRIPTIONAL REGULATOR YBHD"/>
    <property type="match status" value="1"/>
</dbReference>
<dbReference type="PANTHER" id="PTHR30419:SF8">
    <property type="entry name" value="NITROGEN ASSIMILATION TRANSCRIPTIONAL ACTIVATOR-RELATED"/>
    <property type="match status" value="1"/>
</dbReference>
<dbReference type="Pfam" id="PF00126">
    <property type="entry name" value="HTH_1"/>
    <property type="match status" value="1"/>
</dbReference>
<dbReference type="Pfam" id="PF03466">
    <property type="entry name" value="LysR_substrate"/>
    <property type="match status" value="1"/>
</dbReference>
<dbReference type="PRINTS" id="PR00039">
    <property type="entry name" value="HTHLYSR"/>
</dbReference>
<dbReference type="SUPFAM" id="SSF53850">
    <property type="entry name" value="Periplasmic binding protein-like II"/>
    <property type="match status" value="1"/>
</dbReference>
<dbReference type="SUPFAM" id="SSF46785">
    <property type="entry name" value="Winged helix' DNA-binding domain"/>
    <property type="match status" value="1"/>
</dbReference>
<dbReference type="PROSITE" id="PS50931">
    <property type="entry name" value="HTH_LYSR"/>
    <property type="match status" value="1"/>
</dbReference>
<comment type="function">
    <text>Activates transcription of the pcaDCHGB operon for the catabolism of the phenolic compound protocatechuate.</text>
</comment>
<comment type="similarity">
    <text evidence="2">Belongs to the LysR transcriptional regulatory family.</text>
</comment>
<evidence type="ECO:0000255" key="1">
    <source>
        <dbReference type="PROSITE-ProRule" id="PRU00253"/>
    </source>
</evidence>
<evidence type="ECO:0000305" key="2"/>
<proteinExistence type="inferred from homology"/>
<keyword id="KW-0010">Activator</keyword>
<keyword id="KW-0238">DNA-binding</keyword>
<keyword id="KW-0804">Transcription</keyword>
<keyword id="KW-0805">Transcription regulation</keyword>
<accession>P0A4T7</accession>
<accession>P52668</accession>